<comment type="function">
    <text evidence="2">GTP hydrolase that promotes the GTP-dependent binding of aminoacyl-tRNA to the A-site of ribosomes during protein biosynthesis.</text>
</comment>
<comment type="catalytic activity">
    <reaction evidence="2">
        <text>GTP + H2O = GDP + phosphate + H(+)</text>
        <dbReference type="Rhea" id="RHEA:19669"/>
        <dbReference type="ChEBI" id="CHEBI:15377"/>
        <dbReference type="ChEBI" id="CHEBI:15378"/>
        <dbReference type="ChEBI" id="CHEBI:37565"/>
        <dbReference type="ChEBI" id="CHEBI:43474"/>
        <dbReference type="ChEBI" id="CHEBI:58189"/>
        <dbReference type="EC" id="3.6.5.3"/>
    </reaction>
    <physiologicalReaction direction="left-to-right" evidence="2">
        <dbReference type="Rhea" id="RHEA:19670"/>
    </physiologicalReaction>
</comment>
<comment type="subunit">
    <text evidence="2">Monomer.</text>
</comment>
<comment type="subcellular location">
    <subcellularLocation>
        <location>Cytoplasm</location>
    </subcellularLocation>
</comment>
<comment type="similarity">
    <text evidence="2">Belongs to the TRAFAC class translation factor GTPase superfamily. Classic translation factor GTPase family. EF-Tu/EF-1A subfamily.</text>
</comment>
<sequence>MAKGKFERTKPHVNVGTIGHVDHGKTTLTAAITTVLTKKFGGEAKAYDQIDAAPEEKARGITINTAHVEYETANRHYAHVDCPGHADYVKNMITGAAQMDGAILVCSAADGPMPQTREHILLARQVGVPYIIVFLNKCDSVDDAELLELVEMEVRELLSKYDFPGDDTPIVKGSAKLALEGDTGELGEVAIMSLADALDTYIPTPERAVDGAFLMPVEDVFSISGRGTVVTGRVERGIVKVGEEIEIVGIKPTVKTTCTGVEMFRKLLDQGQAGDNVGILLRGTKREDVERGQVLAKPGSITPHTHFTAEVYVLSKDEGGRHTPFFNNYRPQFYFRTTDVTGSIELPKDKEMVMPGDNVSITVKLIAPIAMEEGLRFAIREGGRTVGAGVVAKILD</sequence>
<organism>
    <name type="scientific">Burkholderia cepacia</name>
    <name type="common">Pseudomonas cepacia</name>
    <dbReference type="NCBI Taxonomy" id="292"/>
    <lineage>
        <taxon>Bacteria</taxon>
        <taxon>Pseudomonadati</taxon>
        <taxon>Pseudomonadota</taxon>
        <taxon>Betaproteobacteria</taxon>
        <taxon>Burkholderiales</taxon>
        <taxon>Burkholderiaceae</taxon>
        <taxon>Burkholderia</taxon>
        <taxon>Burkholderia cepacia complex</taxon>
    </lineage>
</organism>
<keyword id="KW-0963">Cytoplasm</keyword>
<keyword id="KW-0251">Elongation factor</keyword>
<keyword id="KW-0342">GTP-binding</keyword>
<keyword id="KW-0378">Hydrolase</keyword>
<keyword id="KW-0460">Magnesium</keyword>
<keyword id="KW-0479">Metal-binding</keyword>
<keyword id="KW-0547">Nucleotide-binding</keyword>
<keyword id="KW-0648">Protein biosynthesis</keyword>
<proteinExistence type="inferred from homology"/>
<gene>
    <name evidence="2" type="primary">tuf</name>
</gene>
<protein>
    <recommendedName>
        <fullName evidence="2">Elongation factor Tu</fullName>
        <shortName evidence="2">EF-Tu</shortName>
        <ecNumber evidence="2">3.6.5.3</ecNumber>
    </recommendedName>
</protein>
<feature type="chain" id="PRO_0000091301" description="Elongation factor Tu">
    <location>
        <begin position="1"/>
        <end position="396"/>
    </location>
</feature>
<feature type="domain" description="tr-type G">
    <location>
        <begin position="10"/>
        <end position="206"/>
    </location>
</feature>
<feature type="region of interest" description="G1" evidence="1">
    <location>
        <begin position="19"/>
        <end position="26"/>
    </location>
</feature>
<feature type="region of interest" description="G2" evidence="1">
    <location>
        <begin position="60"/>
        <end position="64"/>
    </location>
</feature>
<feature type="region of interest" description="G3" evidence="1">
    <location>
        <begin position="81"/>
        <end position="84"/>
    </location>
</feature>
<feature type="region of interest" description="G4" evidence="1">
    <location>
        <begin position="136"/>
        <end position="139"/>
    </location>
</feature>
<feature type="region of interest" description="G5" evidence="1">
    <location>
        <begin position="174"/>
        <end position="176"/>
    </location>
</feature>
<feature type="binding site" evidence="2">
    <location>
        <begin position="19"/>
        <end position="26"/>
    </location>
    <ligand>
        <name>GTP</name>
        <dbReference type="ChEBI" id="CHEBI:37565"/>
    </ligand>
</feature>
<feature type="binding site" evidence="2">
    <location>
        <position position="26"/>
    </location>
    <ligand>
        <name>Mg(2+)</name>
        <dbReference type="ChEBI" id="CHEBI:18420"/>
    </ligand>
</feature>
<feature type="binding site" evidence="2">
    <location>
        <begin position="81"/>
        <end position="85"/>
    </location>
    <ligand>
        <name>GTP</name>
        <dbReference type="ChEBI" id="CHEBI:37565"/>
    </ligand>
</feature>
<feature type="binding site" evidence="2">
    <location>
        <begin position="136"/>
        <end position="139"/>
    </location>
    <ligand>
        <name>GTP</name>
        <dbReference type="ChEBI" id="CHEBI:37565"/>
    </ligand>
</feature>
<reference key="1">
    <citation type="journal article" date="1990" name="Arch. Microbiol.">
        <title>Complete nucleotide sequences of seven eubacterial genes coding for the elongation factor Tu: functional, structural and phylogenetic evaluations.</title>
        <authorList>
            <person name="Ludwig W."/>
            <person name="Weizenegger M."/>
            <person name="Betzl D."/>
            <person name="Leidel E."/>
            <person name="Lenz T."/>
            <person name="Ludvigsen A."/>
            <person name="Moellenhoff D."/>
            <person name="Wenzig P."/>
            <person name="Schleifer K.H."/>
        </authorList>
    </citation>
    <scope>NUCLEOTIDE SEQUENCE [GENOMIC DNA]</scope>
</reference>
<evidence type="ECO:0000250" key="1"/>
<evidence type="ECO:0000255" key="2">
    <source>
        <dbReference type="HAMAP-Rule" id="MF_00118"/>
    </source>
</evidence>
<dbReference type="EC" id="3.6.5.3" evidence="2"/>
<dbReference type="PIR" id="D60663">
    <property type="entry name" value="D60663"/>
</dbReference>
<dbReference type="SMR" id="P33167"/>
<dbReference type="STRING" id="292.WI67_01515"/>
<dbReference type="eggNOG" id="COG0050">
    <property type="taxonomic scope" value="Bacteria"/>
</dbReference>
<dbReference type="GO" id="GO:0005829">
    <property type="term" value="C:cytosol"/>
    <property type="evidence" value="ECO:0007669"/>
    <property type="project" value="TreeGrafter"/>
</dbReference>
<dbReference type="GO" id="GO:0005525">
    <property type="term" value="F:GTP binding"/>
    <property type="evidence" value="ECO:0007669"/>
    <property type="project" value="UniProtKB-UniRule"/>
</dbReference>
<dbReference type="GO" id="GO:0003924">
    <property type="term" value="F:GTPase activity"/>
    <property type="evidence" value="ECO:0007669"/>
    <property type="project" value="InterPro"/>
</dbReference>
<dbReference type="GO" id="GO:0097216">
    <property type="term" value="F:guanosine tetraphosphate binding"/>
    <property type="evidence" value="ECO:0007669"/>
    <property type="project" value="UniProtKB-ARBA"/>
</dbReference>
<dbReference type="GO" id="GO:0003746">
    <property type="term" value="F:translation elongation factor activity"/>
    <property type="evidence" value="ECO:0007669"/>
    <property type="project" value="UniProtKB-UniRule"/>
</dbReference>
<dbReference type="CDD" id="cd01884">
    <property type="entry name" value="EF_Tu"/>
    <property type="match status" value="1"/>
</dbReference>
<dbReference type="CDD" id="cd03697">
    <property type="entry name" value="EFTU_II"/>
    <property type="match status" value="1"/>
</dbReference>
<dbReference type="CDD" id="cd03707">
    <property type="entry name" value="EFTU_III"/>
    <property type="match status" value="1"/>
</dbReference>
<dbReference type="FunFam" id="2.40.30.10:FF:000001">
    <property type="entry name" value="Elongation factor Tu"/>
    <property type="match status" value="1"/>
</dbReference>
<dbReference type="FunFam" id="3.40.50.300:FF:000003">
    <property type="entry name" value="Elongation factor Tu"/>
    <property type="match status" value="1"/>
</dbReference>
<dbReference type="Gene3D" id="3.40.50.300">
    <property type="entry name" value="P-loop containing nucleotide triphosphate hydrolases"/>
    <property type="match status" value="1"/>
</dbReference>
<dbReference type="Gene3D" id="2.40.30.10">
    <property type="entry name" value="Translation factors"/>
    <property type="match status" value="2"/>
</dbReference>
<dbReference type="HAMAP" id="MF_00118_B">
    <property type="entry name" value="EF_Tu_B"/>
    <property type="match status" value="1"/>
</dbReference>
<dbReference type="InterPro" id="IPR041709">
    <property type="entry name" value="EF-Tu_GTP-bd"/>
</dbReference>
<dbReference type="InterPro" id="IPR050055">
    <property type="entry name" value="EF-Tu_GTPase"/>
</dbReference>
<dbReference type="InterPro" id="IPR004161">
    <property type="entry name" value="EFTu-like_2"/>
</dbReference>
<dbReference type="InterPro" id="IPR033720">
    <property type="entry name" value="EFTU_2"/>
</dbReference>
<dbReference type="InterPro" id="IPR031157">
    <property type="entry name" value="G_TR_CS"/>
</dbReference>
<dbReference type="InterPro" id="IPR027417">
    <property type="entry name" value="P-loop_NTPase"/>
</dbReference>
<dbReference type="InterPro" id="IPR005225">
    <property type="entry name" value="Small_GTP-bd"/>
</dbReference>
<dbReference type="InterPro" id="IPR000795">
    <property type="entry name" value="T_Tr_GTP-bd_dom"/>
</dbReference>
<dbReference type="InterPro" id="IPR009000">
    <property type="entry name" value="Transl_B-barrel_sf"/>
</dbReference>
<dbReference type="InterPro" id="IPR009001">
    <property type="entry name" value="Transl_elong_EF1A/Init_IF2_C"/>
</dbReference>
<dbReference type="InterPro" id="IPR004541">
    <property type="entry name" value="Transl_elong_EFTu/EF1A_bac/org"/>
</dbReference>
<dbReference type="InterPro" id="IPR004160">
    <property type="entry name" value="Transl_elong_EFTu/EF1A_C"/>
</dbReference>
<dbReference type="NCBIfam" id="TIGR00485">
    <property type="entry name" value="EF-Tu"/>
    <property type="match status" value="1"/>
</dbReference>
<dbReference type="NCBIfam" id="NF000766">
    <property type="entry name" value="PRK00049.1"/>
    <property type="match status" value="1"/>
</dbReference>
<dbReference type="NCBIfam" id="NF009372">
    <property type="entry name" value="PRK12735.1"/>
    <property type="match status" value="1"/>
</dbReference>
<dbReference type="NCBIfam" id="NF009373">
    <property type="entry name" value="PRK12736.1"/>
    <property type="match status" value="1"/>
</dbReference>
<dbReference type="NCBIfam" id="TIGR00231">
    <property type="entry name" value="small_GTP"/>
    <property type="match status" value="1"/>
</dbReference>
<dbReference type="PANTHER" id="PTHR43721:SF22">
    <property type="entry name" value="ELONGATION FACTOR TU, MITOCHONDRIAL"/>
    <property type="match status" value="1"/>
</dbReference>
<dbReference type="PANTHER" id="PTHR43721">
    <property type="entry name" value="ELONGATION FACTOR TU-RELATED"/>
    <property type="match status" value="1"/>
</dbReference>
<dbReference type="Pfam" id="PF00009">
    <property type="entry name" value="GTP_EFTU"/>
    <property type="match status" value="1"/>
</dbReference>
<dbReference type="Pfam" id="PF03144">
    <property type="entry name" value="GTP_EFTU_D2"/>
    <property type="match status" value="1"/>
</dbReference>
<dbReference type="Pfam" id="PF03143">
    <property type="entry name" value="GTP_EFTU_D3"/>
    <property type="match status" value="1"/>
</dbReference>
<dbReference type="PRINTS" id="PR00315">
    <property type="entry name" value="ELONGATNFCT"/>
</dbReference>
<dbReference type="SUPFAM" id="SSF50465">
    <property type="entry name" value="EF-Tu/eEF-1alpha/eIF2-gamma C-terminal domain"/>
    <property type="match status" value="1"/>
</dbReference>
<dbReference type="SUPFAM" id="SSF52540">
    <property type="entry name" value="P-loop containing nucleoside triphosphate hydrolases"/>
    <property type="match status" value="1"/>
</dbReference>
<dbReference type="SUPFAM" id="SSF50447">
    <property type="entry name" value="Translation proteins"/>
    <property type="match status" value="1"/>
</dbReference>
<dbReference type="PROSITE" id="PS00301">
    <property type="entry name" value="G_TR_1"/>
    <property type="match status" value="1"/>
</dbReference>
<dbReference type="PROSITE" id="PS51722">
    <property type="entry name" value="G_TR_2"/>
    <property type="match status" value="1"/>
</dbReference>
<accession>P33167</accession>
<name>EFTU_BURCE</name>